<accession>P48249</accession>
<feature type="signal peptide" evidence="1">
    <location>
        <begin position="1"/>
        <end position="24"/>
    </location>
</feature>
<feature type="chain" id="PRO_0000032935" description="Prolactin">
    <location>
        <begin position="25"/>
        <end position="212"/>
    </location>
</feature>
<feature type="disulfide bond" evidence="1">
    <location>
        <begin position="70"/>
        <end position="185"/>
    </location>
</feature>
<feature type="disulfide bond" evidence="1">
    <location>
        <begin position="202"/>
        <end position="212"/>
    </location>
</feature>
<keyword id="KW-1015">Disulfide bond</keyword>
<keyword id="KW-0372">Hormone</keyword>
<keyword id="KW-1185">Reference proteome</keyword>
<keyword id="KW-0964">Secreted</keyword>
<keyword id="KW-0732">Signal</keyword>
<sequence length="212" mass="23489">MAQRKTNGSKLFMMVLYMVAACSAIPISDLLDRASQRSDTLHSLSTTLTQDLDSHFPPMGRVITPRPSMCHTSSLHTPIDKEQALQVSEADLLSLVRSLLQAWRDPLVILSTSANTLPHPAQNSISTKVQELLEHTKSLGDGLDILSGKFGPAAQSISSLPYRGGNDISQDRISRLTNFHFLMSCFRRDSHKIDSFLKVLRCRAAKLQPEMC</sequence>
<gene>
    <name type="primary">prl</name>
</gene>
<name>PRL_DICLA</name>
<dbReference type="EMBL" id="X78723">
    <property type="protein sequence ID" value="CAA55369.1"/>
    <property type="molecule type" value="mRNA"/>
</dbReference>
<dbReference type="PIR" id="I51275">
    <property type="entry name" value="I51275"/>
</dbReference>
<dbReference type="SMR" id="P48249"/>
<dbReference type="Proteomes" id="UP000694389">
    <property type="component" value="Unplaced"/>
</dbReference>
<dbReference type="GO" id="GO:0005615">
    <property type="term" value="C:extracellular space"/>
    <property type="evidence" value="ECO:0007669"/>
    <property type="project" value="TreeGrafter"/>
</dbReference>
<dbReference type="GO" id="GO:0005179">
    <property type="term" value="F:hormone activity"/>
    <property type="evidence" value="ECO:0007669"/>
    <property type="project" value="UniProtKB-KW"/>
</dbReference>
<dbReference type="GO" id="GO:0008284">
    <property type="term" value="P:positive regulation of cell population proliferation"/>
    <property type="evidence" value="ECO:0007669"/>
    <property type="project" value="TreeGrafter"/>
</dbReference>
<dbReference type="GO" id="GO:0046427">
    <property type="term" value="P:positive regulation of receptor signaling pathway via JAK-STAT"/>
    <property type="evidence" value="ECO:0007669"/>
    <property type="project" value="TreeGrafter"/>
</dbReference>
<dbReference type="GO" id="GO:0031667">
    <property type="term" value="P:response to nutrient levels"/>
    <property type="evidence" value="ECO:0007669"/>
    <property type="project" value="TreeGrafter"/>
</dbReference>
<dbReference type="Gene3D" id="1.20.1250.10">
    <property type="match status" value="1"/>
</dbReference>
<dbReference type="InterPro" id="IPR009079">
    <property type="entry name" value="4_helix_cytokine-like_core"/>
</dbReference>
<dbReference type="InterPro" id="IPR001400">
    <property type="entry name" value="Somatotropin/Prolactin"/>
</dbReference>
<dbReference type="InterPro" id="IPR018116">
    <property type="entry name" value="Somatotropin_CS"/>
</dbReference>
<dbReference type="PANTHER" id="PTHR11417:SF5">
    <property type="entry name" value="PROLACTIN"/>
    <property type="match status" value="1"/>
</dbReference>
<dbReference type="PANTHER" id="PTHR11417">
    <property type="entry name" value="SOMATOTROPIN,PROLACTIN"/>
    <property type="match status" value="1"/>
</dbReference>
<dbReference type="Pfam" id="PF00103">
    <property type="entry name" value="Hormone_1"/>
    <property type="match status" value="1"/>
</dbReference>
<dbReference type="PRINTS" id="PR00836">
    <property type="entry name" value="SOMATOTROPIN"/>
</dbReference>
<dbReference type="SUPFAM" id="SSF47266">
    <property type="entry name" value="4-helical cytokines"/>
    <property type="match status" value="1"/>
</dbReference>
<dbReference type="PROSITE" id="PS00266">
    <property type="entry name" value="SOMATOTROPIN_1"/>
    <property type="match status" value="1"/>
</dbReference>
<dbReference type="PROSITE" id="PS00338">
    <property type="entry name" value="SOMATOTROPIN_2"/>
    <property type="match status" value="1"/>
</dbReference>
<reference key="1">
    <citation type="journal article" date="1994" name="Biochem. Mol. Biol. Int.">
        <title>The prolactin of European sea bass (Dicentrarchus labrax L.): cloning of cDNA and efficient expression in Escherichia coli.</title>
        <authorList>
            <person name="Doliana R."/>
            <person name="Argentini C."/>
            <person name="Segat D."/>
            <person name="Santarossa P."/>
            <person name="Mucignat M.T."/>
            <person name="Colombo L."/>
            <person name="Bortolussi M."/>
        </authorList>
    </citation>
    <scope>NUCLEOTIDE SEQUENCE [MRNA]</scope>
    <source>
        <tissue>Pituitary</tissue>
    </source>
</reference>
<organism>
    <name type="scientific">Dicentrarchus labrax</name>
    <name type="common">European seabass</name>
    <name type="synonym">Morone labrax</name>
    <dbReference type="NCBI Taxonomy" id="13489"/>
    <lineage>
        <taxon>Eukaryota</taxon>
        <taxon>Metazoa</taxon>
        <taxon>Chordata</taxon>
        <taxon>Craniata</taxon>
        <taxon>Vertebrata</taxon>
        <taxon>Euteleostomi</taxon>
        <taxon>Actinopterygii</taxon>
        <taxon>Neopterygii</taxon>
        <taxon>Teleostei</taxon>
        <taxon>Neoteleostei</taxon>
        <taxon>Acanthomorphata</taxon>
        <taxon>Eupercaria</taxon>
        <taxon>Moronidae</taxon>
        <taxon>Dicentrarchus</taxon>
    </lineage>
</organism>
<comment type="subcellular location">
    <subcellularLocation>
        <location>Secreted</location>
    </subcellularLocation>
</comment>
<comment type="tissue specificity">
    <text>Pituitary gland.</text>
</comment>
<comment type="similarity">
    <text evidence="2">Belongs to the somatotropin/prolactin family.</text>
</comment>
<proteinExistence type="evidence at transcript level"/>
<evidence type="ECO:0000250" key="1"/>
<evidence type="ECO:0000305" key="2"/>
<protein>
    <recommendedName>
        <fullName>Prolactin</fullName>
        <shortName>PRL</shortName>
    </recommendedName>
</protein>